<keyword id="KW-1003">Cell membrane</keyword>
<keyword id="KW-0472">Membrane</keyword>
<keyword id="KW-1185">Reference proteome</keyword>
<keyword id="KW-0812">Transmembrane</keyword>
<keyword id="KW-1133">Transmembrane helix</keyword>
<sequence length="234" mass="25697">MNDNNVIFDQRSDGLNAFFSKIYALMGAGVLVSALVSWIMITFFLDNMTAILQSGSLFFLVLWIIPLVMVVSLQGLAMKNSKMALPIFIGYAAFMGFLISFTLLMYTATDITLAFVTAAAMFFGLSVYGRFTKRNLSAMGKAFGVAVWGLIIAMFLNFFFASTGLTILISLVGVVIFAGLIAWDNQKITQVYNANNGQVSDGWAISMALSLYLDFINMFLFLLRLFGIAGGNRD</sequence>
<dbReference type="EMBL" id="AE005176">
    <property type="protein sequence ID" value="AAK05834.1"/>
    <property type="status" value="ALT_INIT"/>
    <property type="molecule type" value="Genomic_DNA"/>
</dbReference>
<dbReference type="PIR" id="H86841">
    <property type="entry name" value="H86841"/>
</dbReference>
<dbReference type="RefSeq" id="NP_267892.1">
    <property type="nucleotide sequence ID" value="NC_002662.1"/>
</dbReference>
<dbReference type="SMR" id="Q9CEU8"/>
<dbReference type="PaxDb" id="272623-L177346"/>
<dbReference type="EnsemblBacteria" id="AAK05834">
    <property type="protein sequence ID" value="AAK05834"/>
    <property type="gene ID" value="L177346"/>
</dbReference>
<dbReference type="KEGG" id="lla:L177346"/>
<dbReference type="PATRIC" id="fig|272623.7.peg.1861"/>
<dbReference type="eggNOG" id="COG0670">
    <property type="taxonomic scope" value="Bacteria"/>
</dbReference>
<dbReference type="HOGENOM" id="CLU_058671_1_2_9"/>
<dbReference type="OrthoDB" id="9793828at2"/>
<dbReference type="Proteomes" id="UP000002196">
    <property type="component" value="Chromosome"/>
</dbReference>
<dbReference type="GO" id="GO:0005886">
    <property type="term" value="C:plasma membrane"/>
    <property type="evidence" value="ECO:0007669"/>
    <property type="project" value="UniProtKB-SubCell"/>
</dbReference>
<dbReference type="CDD" id="cd10432">
    <property type="entry name" value="BI-1-like_bacterial"/>
    <property type="match status" value="1"/>
</dbReference>
<dbReference type="InterPro" id="IPR006214">
    <property type="entry name" value="Bax_inhibitor_1-related"/>
</dbReference>
<dbReference type="PANTHER" id="PTHR23291">
    <property type="entry name" value="BAX INHIBITOR-RELATED"/>
    <property type="match status" value="1"/>
</dbReference>
<dbReference type="PANTHER" id="PTHR23291:SF50">
    <property type="entry name" value="PROTEIN LIFEGUARD 4"/>
    <property type="match status" value="1"/>
</dbReference>
<dbReference type="Pfam" id="PF01027">
    <property type="entry name" value="Bax1-I"/>
    <property type="match status" value="1"/>
</dbReference>
<name>YRJE_LACLA</name>
<evidence type="ECO:0000255" key="1"/>
<evidence type="ECO:0000305" key="2"/>
<feature type="chain" id="PRO_0000179107" description="Uncharacterized protein YrjE">
    <location>
        <begin position="1"/>
        <end position="234"/>
    </location>
</feature>
<feature type="transmembrane region" description="Helical" evidence="1">
    <location>
        <begin position="25"/>
        <end position="45"/>
    </location>
</feature>
<feature type="transmembrane region" description="Helical" evidence="1">
    <location>
        <begin position="57"/>
        <end position="77"/>
    </location>
</feature>
<feature type="transmembrane region" description="Helical" evidence="1">
    <location>
        <begin position="85"/>
        <end position="105"/>
    </location>
</feature>
<feature type="transmembrane region" description="Helical" evidence="1">
    <location>
        <begin position="108"/>
        <end position="128"/>
    </location>
</feature>
<feature type="transmembrane region" description="Helical" evidence="1">
    <location>
        <begin position="142"/>
        <end position="162"/>
    </location>
</feature>
<feature type="transmembrane region" description="Helical" evidence="1">
    <location>
        <begin position="163"/>
        <end position="183"/>
    </location>
</feature>
<feature type="transmembrane region" description="Helical" evidence="1">
    <location>
        <begin position="203"/>
        <end position="223"/>
    </location>
</feature>
<comment type="subcellular location">
    <subcellularLocation>
        <location evidence="2">Cell membrane</location>
        <topology evidence="2">Multi-pass membrane protein</topology>
    </subcellularLocation>
</comment>
<comment type="similarity">
    <text evidence="2">Belongs to the BI1 family.</text>
</comment>
<comment type="sequence caution" evidence="2">
    <conflict type="erroneous initiation">
        <sequence resource="EMBL-CDS" id="AAK05834"/>
    </conflict>
</comment>
<gene>
    <name type="primary">yrjE</name>
    <name type="ordered locus">LL1736</name>
    <name type="ORF">L177346</name>
</gene>
<organism>
    <name type="scientific">Lactococcus lactis subsp. lactis (strain IL1403)</name>
    <name type="common">Streptococcus lactis</name>
    <dbReference type="NCBI Taxonomy" id="272623"/>
    <lineage>
        <taxon>Bacteria</taxon>
        <taxon>Bacillati</taxon>
        <taxon>Bacillota</taxon>
        <taxon>Bacilli</taxon>
        <taxon>Lactobacillales</taxon>
        <taxon>Streptococcaceae</taxon>
        <taxon>Lactococcus</taxon>
    </lineage>
</organism>
<accession>Q9CEU8</accession>
<protein>
    <recommendedName>
        <fullName>Uncharacterized protein YrjE</fullName>
    </recommendedName>
</protein>
<reference key="1">
    <citation type="journal article" date="2001" name="Genome Res.">
        <title>The complete genome sequence of the lactic acid bacterium Lactococcus lactis ssp. lactis IL1403.</title>
        <authorList>
            <person name="Bolotin A."/>
            <person name="Wincker P."/>
            <person name="Mauger S."/>
            <person name="Jaillon O."/>
            <person name="Malarme K."/>
            <person name="Weissenbach J."/>
            <person name="Ehrlich S.D."/>
            <person name="Sorokin A."/>
        </authorList>
    </citation>
    <scope>NUCLEOTIDE SEQUENCE [LARGE SCALE GENOMIC DNA]</scope>
    <source>
        <strain>IL1403</strain>
    </source>
</reference>
<proteinExistence type="inferred from homology"/>